<organism>
    <name type="scientific">Bothrops jararaca</name>
    <name type="common">Jararaca</name>
    <name type="synonym">Bothrops jajaraca</name>
    <dbReference type="NCBI Taxonomy" id="8724"/>
    <lineage>
        <taxon>Eukaryota</taxon>
        <taxon>Metazoa</taxon>
        <taxon>Chordata</taxon>
        <taxon>Craniata</taxon>
        <taxon>Vertebrata</taxon>
        <taxon>Euteleostomi</taxon>
        <taxon>Lepidosauria</taxon>
        <taxon>Squamata</taxon>
        <taxon>Bifurcata</taxon>
        <taxon>Unidentata</taxon>
        <taxon>Episquamata</taxon>
        <taxon>Toxicofera</taxon>
        <taxon>Serpentes</taxon>
        <taxon>Colubroidea</taxon>
        <taxon>Viperidae</taxon>
        <taxon>Crotalinae</taxon>
        <taxon>Bothrops</taxon>
    </lineage>
</organism>
<keyword id="KW-1015">Disulfide bond</keyword>
<keyword id="KW-0325">Glycoprotein</keyword>
<keyword id="KW-1199">Hemostasis impairing toxin</keyword>
<keyword id="KW-0964">Secreted</keyword>
<keyword id="KW-0721">Serine protease homolog</keyword>
<keyword id="KW-0732">Signal</keyword>
<keyword id="KW-0800">Toxin</keyword>
<protein>
    <recommendedName>
        <fullName>Snake venom serine protease homolog HS120</fullName>
    </recommendedName>
    <alternativeName>
        <fullName>Venom serine proteinase-like HS120</fullName>
    </alternativeName>
</protein>
<dbReference type="EMBL" id="AB178323">
    <property type="protein sequence ID" value="BAD66929.1"/>
    <property type="molecule type" value="mRNA"/>
</dbReference>
<dbReference type="SMR" id="Q5W958"/>
<dbReference type="MEROPS" id="S01.456"/>
<dbReference type="GO" id="GO:0005576">
    <property type="term" value="C:extracellular region"/>
    <property type="evidence" value="ECO:0007669"/>
    <property type="project" value="UniProtKB-SubCell"/>
</dbReference>
<dbReference type="GO" id="GO:0030141">
    <property type="term" value="C:secretory granule"/>
    <property type="evidence" value="ECO:0007669"/>
    <property type="project" value="TreeGrafter"/>
</dbReference>
<dbReference type="GO" id="GO:0090729">
    <property type="term" value="F:toxin activity"/>
    <property type="evidence" value="ECO:0007669"/>
    <property type="project" value="UniProtKB-KW"/>
</dbReference>
<dbReference type="CDD" id="cd00190">
    <property type="entry name" value="Tryp_SPc"/>
    <property type="match status" value="1"/>
</dbReference>
<dbReference type="FunFam" id="2.40.10.10:FF:000158">
    <property type="entry name" value="Thrombin-like enzyme saxthrombin"/>
    <property type="match status" value="1"/>
</dbReference>
<dbReference type="Gene3D" id="2.40.10.10">
    <property type="entry name" value="Trypsin-like serine proteases"/>
    <property type="match status" value="2"/>
</dbReference>
<dbReference type="InterPro" id="IPR009003">
    <property type="entry name" value="Peptidase_S1_PA"/>
</dbReference>
<dbReference type="InterPro" id="IPR043504">
    <property type="entry name" value="Peptidase_S1_PA_chymotrypsin"/>
</dbReference>
<dbReference type="InterPro" id="IPR001314">
    <property type="entry name" value="Peptidase_S1A"/>
</dbReference>
<dbReference type="InterPro" id="IPR001254">
    <property type="entry name" value="Trypsin_dom"/>
</dbReference>
<dbReference type="PANTHER" id="PTHR24271:SF47">
    <property type="entry name" value="KALLIKREIN-1"/>
    <property type="match status" value="1"/>
</dbReference>
<dbReference type="PANTHER" id="PTHR24271">
    <property type="entry name" value="KALLIKREIN-RELATED"/>
    <property type="match status" value="1"/>
</dbReference>
<dbReference type="Pfam" id="PF00089">
    <property type="entry name" value="Trypsin"/>
    <property type="match status" value="1"/>
</dbReference>
<dbReference type="PRINTS" id="PR00722">
    <property type="entry name" value="CHYMOTRYPSIN"/>
</dbReference>
<dbReference type="SMART" id="SM00020">
    <property type="entry name" value="Tryp_SPc"/>
    <property type="match status" value="1"/>
</dbReference>
<dbReference type="SUPFAM" id="SSF50494">
    <property type="entry name" value="Trypsin-like serine proteases"/>
    <property type="match status" value="1"/>
</dbReference>
<dbReference type="PROSITE" id="PS50240">
    <property type="entry name" value="TRYPSIN_DOM"/>
    <property type="match status" value="1"/>
</dbReference>
<accession>Q5W958</accession>
<reference key="1">
    <citation type="journal article" date="2005" name="Toxicon">
        <title>Molecular cloning of serine proteinases from Bothrops jararaca venom gland.</title>
        <authorList>
            <person name="Saguchi K."/>
            <person name="Hagiwara-Saguchi Y."/>
            <person name="Murayama N."/>
            <person name="Ohi H."/>
            <person name="Fujita Y."/>
            <person name="Camargo A.C.M."/>
            <person name="Serrano S.M.T."/>
            <person name="Higuchi S."/>
        </authorList>
    </citation>
    <scope>NUCLEOTIDE SEQUENCE [MRNA]</scope>
    <source>
        <tissue>Venom gland</tissue>
    </source>
</reference>
<comment type="function">
    <text evidence="4">Snake venom serine protease homolog that may act in the hemostasis system of the prey.</text>
</comment>
<comment type="subcellular location">
    <subcellularLocation>
        <location evidence="5">Secreted</location>
    </subcellularLocation>
</comment>
<comment type="tissue specificity">
    <text evidence="5">Expressed by the venom gland.</text>
</comment>
<comment type="similarity">
    <text evidence="4">Belongs to the peptidase S1 family. Snake venom subfamily.</text>
</comment>
<comment type="caution">
    <text evidence="4">Lacks the conserved His residue in position 64 essential for protease activity.</text>
</comment>
<sequence>MVLIRVIANLLILQLSYAQKSSELVIGGDECNINEHPFLAFLYTGWIFCSGTLINKEWVLTVKQCNNRRPMRIYLGMHTRSVPNDDEEIRYPKEMFICPNKKKNDIMLIRLNRPVNNSEHIAPLSLPSNPPSVGSVCRIMGWGTITPSKATYPDVPHCANINLFNYTVCRGAHAGLPVTSRKLCAGVLEGGIDTCSADSGGPLICNGQLQGIVSWRGGSCAQPHKPGLYTKVFDYLPWIQSIIAGSTTATCPP</sequence>
<feature type="signal peptide" evidence="2">
    <location>
        <begin position="1"/>
        <end position="18"/>
    </location>
</feature>
<feature type="propeptide" id="PRO_0000294990" evidence="1">
    <location>
        <begin position="19"/>
        <end position="24"/>
    </location>
</feature>
<feature type="chain" id="PRO_5000051173" description="Snake venom serine protease homolog HS120">
    <location>
        <begin position="25"/>
        <end position="253"/>
    </location>
</feature>
<feature type="domain" description="Peptidase S1" evidence="3">
    <location>
        <begin position="25"/>
        <end position="244"/>
    </location>
</feature>
<feature type="glycosylation site" description="N-linked (GlcNAc...) asparagine" evidence="2">
    <location>
        <position position="116"/>
    </location>
</feature>
<feature type="glycosylation site" description="N-linked (GlcNAc...) asparagine" evidence="1">
    <location>
        <position position="165"/>
    </location>
</feature>
<feature type="disulfide bond" evidence="3">
    <location>
        <begin position="31"/>
        <end position="158"/>
    </location>
</feature>
<feature type="disulfide bond" evidence="3">
    <location>
        <begin position="49"/>
        <end position="65"/>
    </location>
</feature>
<feature type="disulfide bond" evidence="3">
    <location>
        <begin position="98"/>
        <end position="251"/>
    </location>
</feature>
<feature type="disulfide bond" evidence="3">
    <location>
        <begin position="137"/>
        <end position="205"/>
    </location>
</feature>
<feature type="disulfide bond" evidence="3">
    <location>
        <begin position="169"/>
        <end position="184"/>
    </location>
</feature>
<feature type="disulfide bond" evidence="3">
    <location>
        <begin position="195"/>
        <end position="220"/>
    </location>
</feature>
<evidence type="ECO:0000250" key="1"/>
<evidence type="ECO:0000255" key="2"/>
<evidence type="ECO:0000255" key="3">
    <source>
        <dbReference type="PROSITE-ProRule" id="PRU00274"/>
    </source>
</evidence>
<evidence type="ECO:0000305" key="4"/>
<evidence type="ECO:0000305" key="5">
    <source>
    </source>
</evidence>
<name>VSPH_BOTJA</name>
<proteinExistence type="evidence at transcript level"/>